<dbReference type="EC" id="2.7.7.6" evidence="1"/>
<dbReference type="EMBL" id="CP000084">
    <property type="protein sequence ID" value="AAZ22001.1"/>
    <property type="molecule type" value="Genomic_DNA"/>
</dbReference>
<dbReference type="SMR" id="Q4FLD7"/>
<dbReference type="STRING" id="335992.SAR11_1194"/>
<dbReference type="KEGG" id="pub:SAR11_1194"/>
<dbReference type="eggNOG" id="COG1758">
    <property type="taxonomic scope" value="Bacteria"/>
</dbReference>
<dbReference type="HOGENOM" id="CLU_126402_0_0_5"/>
<dbReference type="OrthoDB" id="9796300at2"/>
<dbReference type="Proteomes" id="UP000002528">
    <property type="component" value="Chromosome"/>
</dbReference>
<dbReference type="GO" id="GO:0000428">
    <property type="term" value="C:DNA-directed RNA polymerase complex"/>
    <property type="evidence" value="ECO:0007669"/>
    <property type="project" value="UniProtKB-KW"/>
</dbReference>
<dbReference type="GO" id="GO:0003677">
    <property type="term" value="F:DNA binding"/>
    <property type="evidence" value="ECO:0007669"/>
    <property type="project" value="UniProtKB-UniRule"/>
</dbReference>
<dbReference type="GO" id="GO:0003899">
    <property type="term" value="F:DNA-directed RNA polymerase activity"/>
    <property type="evidence" value="ECO:0007669"/>
    <property type="project" value="UniProtKB-UniRule"/>
</dbReference>
<dbReference type="GO" id="GO:0006351">
    <property type="term" value="P:DNA-templated transcription"/>
    <property type="evidence" value="ECO:0007669"/>
    <property type="project" value="UniProtKB-UniRule"/>
</dbReference>
<dbReference type="Gene3D" id="3.90.940.10">
    <property type="match status" value="1"/>
</dbReference>
<dbReference type="HAMAP" id="MF_00366">
    <property type="entry name" value="RNApol_bact_RpoZ"/>
    <property type="match status" value="1"/>
</dbReference>
<dbReference type="InterPro" id="IPR003716">
    <property type="entry name" value="DNA-dir_RNA_pol_omega"/>
</dbReference>
<dbReference type="InterPro" id="IPR006110">
    <property type="entry name" value="Pol_omega/Rpo6/RPB6"/>
</dbReference>
<dbReference type="InterPro" id="IPR036161">
    <property type="entry name" value="RPB6/omega-like_sf"/>
</dbReference>
<dbReference type="NCBIfam" id="TIGR00690">
    <property type="entry name" value="rpoZ"/>
    <property type="match status" value="1"/>
</dbReference>
<dbReference type="PANTHER" id="PTHR34476">
    <property type="entry name" value="DNA-DIRECTED RNA POLYMERASE SUBUNIT OMEGA"/>
    <property type="match status" value="1"/>
</dbReference>
<dbReference type="PANTHER" id="PTHR34476:SF1">
    <property type="entry name" value="DNA-DIRECTED RNA POLYMERASE SUBUNIT OMEGA"/>
    <property type="match status" value="1"/>
</dbReference>
<dbReference type="Pfam" id="PF01192">
    <property type="entry name" value="RNA_pol_Rpb6"/>
    <property type="match status" value="1"/>
</dbReference>
<dbReference type="SMART" id="SM01409">
    <property type="entry name" value="RNA_pol_Rpb6"/>
    <property type="match status" value="1"/>
</dbReference>
<dbReference type="SUPFAM" id="SSF63562">
    <property type="entry name" value="RPB6/omega subunit-like"/>
    <property type="match status" value="1"/>
</dbReference>
<feature type="chain" id="PRO_0000237483" description="DNA-directed RNA polymerase subunit omega">
    <location>
        <begin position="1"/>
        <end position="180"/>
    </location>
</feature>
<feature type="region of interest" description="Disordered" evidence="2">
    <location>
        <begin position="100"/>
        <end position="180"/>
    </location>
</feature>
<feature type="compositionally biased region" description="Acidic residues" evidence="2">
    <location>
        <begin position="137"/>
        <end position="151"/>
    </location>
</feature>
<feature type="compositionally biased region" description="Acidic residues" evidence="2">
    <location>
        <begin position="159"/>
        <end position="180"/>
    </location>
</feature>
<accession>Q4FLD7</accession>
<protein>
    <recommendedName>
        <fullName evidence="1">DNA-directed RNA polymerase subunit omega</fullName>
        <shortName evidence="1">RNAP omega subunit</shortName>
        <ecNumber evidence="1">2.7.7.6</ecNumber>
    </recommendedName>
    <alternativeName>
        <fullName evidence="1">RNA polymerase omega subunit</fullName>
    </alternativeName>
    <alternativeName>
        <fullName evidence="1">Transcriptase subunit omega</fullName>
    </alternativeName>
</protein>
<organism>
    <name type="scientific">Pelagibacter ubique (strain HTCC1062)</name>
    <dbReference type="NCBI Taxonomy" id="335992"/>
    <lineage>
        <taxon>Bacteria</taxon>
        <taxon>Pseudomonadati</taxon>
        <taxon>Pseudomonadota</taxon>
        <taxon>Alphaproteobacteria</taxon>
        <taxon>Candidatus Pelagibacterales</taxon>
        <taxon>Candidatus Pelagibacteraceae</taxon>
        <taxon>Candidatus Pelagibacter</taxon>
    </lineage>
</organism>
<gene>
    <name evidence="1" type="primary">rpoZ</name>
    <name type="ordered locus">SAR11_1194</name>
</gene>
<evidence type="ECO:0000255" key="1">
    <source>
        <dbReference type="HAMAP-Rule" id="MF_00366"/>
    </source>
</evidence>
<evidence type="ECO:0000256" key="2">
    <source>
        <dbReference type="SAM" id="MobiDB-lite"/>
    </source>
</evidence>
<proteinExistence type="inferred from homology"/>
<keyword id="KW-0240">DNA-directed RNA polymerase</keyword>
<keyword id="KW-0548">Nucleotidyltransferase</keyword>
<keyword id="KW-1185">Reference proteome</keyword>
<keyword id="KW-0804">Transcription</keyword>
<keyword id="KW-0808">Transferase</keyword>
<comment type="function">
    <text evidence="1">Promotes RNA polymerase assembly. Latches the N- and C-terminal regions of the beta' subunit thereby facilitating its interaction with the beta and alpha subunits.</text>
</comment>
<comment type="catalytic activity">
    <reaction evidence="1">
        <text>RNA(n) + a ribonucleoside 5'-triphosphate = RNA(n+1) + diphosphate</text>
        <dbReference type="Rhea" id="RHEA:21248"/>
        <dbReference type="Rhea" id="RHEA-COMP:14527"/>
        <dbReference type="Rhea" id="RHEA-COMP:17342"/>
        <dbReference type="ChEBI" id="CHEBI:33019"/>
        <dbReference type="ChEBI" id="CHEBI:61557"/>
        <dbReference type="ChEBI" id="CHEBI:140395"/>
        <dbReference type="EC" id="2.7.7.6"/>
    </reaction>
</comment>
<comment type="subunit">
    <text evidence="1">The RNAP catalytic core consists of 2 alpha, 1 beta, 1 beta' and 1 omega subunit. When a sigma factor is associated with the core the holoenzyme is formed, which can initiate transcription.</text>
</comment>
<comment type="similarity">
    <text evidence="1">Belongs to the RNA polymerase subunit omega family.</text>
</comment>
<sequence>MARVTVEDCIDKVESPYELVLVAKERAVQLNSGLEPTLDRDNDKNTVISLREIAADTIKVSDLTDSAIHKLRKHVEQVDDGTDDDEIIGDDFESMYKGEISKSGTPILPSKRARKIPEKIQVSSDDLEELTAKAEPEVDVDAELEVGDEETAVSLDQIAEAETEAETTEVNSDDSETTNS</sequence>
<reference key="1">
    <citation type="journal article" date="2005" name="Science">
        <title>Genome streamlining in a cosmopolitan oceanic bacterium.</title>
        <authorList>
            <person name="Giovannoni S.J."/>
            <person name="Tripp H.J."/>
            <person name="Givan S."/>
            <person name="Podar M."/>
            <person name="Vergin K.L."/>
            <person name="Baptista D."/>
            <person name="Bibbs L."/>
            <person name="Eads J."/>
            <person name="Richardson T.H."/>
            <person name="Noordewier M."/>
            <person name="Rappe M.S."/>
            <person name="Short J.M."/>
            <person name="Carrington J.C."/>
            <person name="Mathur E.J."/>
        </authorList>
    </citation>
    <scope>NUCLEOTIDE SEQUENCE [LARGE SCALE GENOMIC DNA]</scope>
    <source>
        <strain>HTCC1062</strain>
    </source>
</reference>
<name>RPOZ_PELUB</name>